<gene>
    <name evidence="1" type="primary">rpsT</name>
    <name type="ordered locus">BBR47_20030</name>
</gene>
<evidence type="ECO:0000255" key="1">
    <source>
        <dbReference type="HAMAP-Rule" id="MF_00500"/>
    </source>
</evidence>
<evidence type="ECO:0000256" key="2">
    <source>
        <dbReference type="SAM" id="MobiDB-lite"/>
    </source>
</evidence>
<evidence type="ECO:0000305" key="3"/>
<name>RS20_BREBN</name>
<accession>C0ZB21</accession>
<reference key="1">
    <citation type="submission" date="2005-03" db="EMBL/GenBank/DDBJ databases">
        <title>Brevibacillus brevis strain 47, complete genome.</title>
        <authorList>
            <person name="Hosoyama A."/>
            <person name="Yamada R."/>
            <person name="Hongo Y."/>
            <person name="Terui Y."/>
            <person name="Ankai A."/>
            <person name="Masuyama W."/>
            <person name="Sekiguchi M."/>
            <person name="Takeda T."/>
            <person name="Asano K."/>
            <person name="Ohji S."/>
            <person name="Ichikawa N."/>
            <person name="Narita S."/>
            <person name="Aoki N."/>
            <person name="Miura H."/>
            <person name="Matsushita S."/>
            <person name="Sekigawa T."/>
            <person name="Yamagata H."/>
            <person name="Yoshikawa H."/>
            <person name="Udaka S."/>
            <person name="Tanikawa S."/>
            <person name="Fujita N."/>
        </authorList>
    </citation>
    <scope>NUCLEOTIDE SEQUENCE [LARGE SCALE GENOMIC DNA]</scope>
    <source>
        <strain>47 / JCM 6285 / NBRC 100599</strain>
    </source>
</reference>
<proteinExistence type="inferred from homology"/>
<protein>
    <recommendedName>
        <fullName evidence="1">Small ribosomal subunit protein bS20</fullName>
    </recommendedName>
    <alternativeName>
        <fullName evidence="3">30S ribosomal protein S20</fullName>
    </alternativeName>
</protein>
<comment type="function">
    <text evidence="1">Binds directly to 16S ribosomal RNA.</text>
</comment>
<comment type="similarity">
    <text evidence="1">Belongs to the bacterial ribosomal protein bS20 family.</text>
</comment>
<organism>
    <name type="scientific">Brevibacillus brevis (strain 47 / JCM 6285 / NBRC 100599)</name>
    <dbReference type="NCBI Taxonomy" id="358681"/>
    <lineage>
        <taxon>Bacteria</taxon>
        <taxon>Bacillati</taxon>
        <taxon>Bacillota</taxon>
        <taxon>Bacilli</taxon>
        <taxon>Bacillales</taxon>
        <taxon>Paenibacillaceae</taxon>
        <taxon>Brevibacillus</taxon>
    </lineage>
</organism>
<keyword id="KW-1185">Reference proteome</keyword>
<keyword id="KW-0687">Ribonucleoprotein</keyword>
<keyword id="KW-0689">Ribosomal protein</keyword>
<keyword id="KW-0694">RNA-binding</keyword>
<keyword id="KW-0699">rRNA-binding</keyword>
<feature type="chain" id="PRO_1000194227" description="Small ribosomal subunit protein bS20">
    <location>
        <begin position="1"/>
        <end position="91"/>
    </location>
</feature>
<feature type="region of interest" description="Disordered" evidence="2">
    <location>
        <begin position="1"/>
        <end position="28"/>
    </location>
</feature>
<feature type="compositionally biased region" description="Basic residues" evidence="2">
    <location>
        <begin position="7"/>
        <end position="23"/>
    </location>
</feature>
<sequence>MPNIKSAIKRTKTIEKRRAHRASQKSDLRTSIKNFEKAVAASDVALAKSTLLVAVKKLDKAASKGLIHKNAANRQKSRLMKKLNVLSAPVA</sequence>
<dbReference type="EMBL" id="AP008955">
    <property type="protein sequence ID" value="BAH42980.1"/>
    <property type="molecule type" value="Genomic_DNA"/>
</dbReference>
<dbReference type="RefSeq" id="WP_012685714.1">
    <property type="nucleotide sequence ID" value="NC_012491.1"/>
</dbReference>
<dbReference type="SMR" id="C0ZB21"/>
<dbReference type="STRING" id="358681.BBR47_20030"/>
<dbReference type="KEGG" id="bbe:BBR47_20030"/>
<dbReference type="eggNOG" id="COG0268">
    <property type="taxonomic scope" value="Bacteria"/>
</dbReference>
<dbReference type="HOGENOM" id="CLU_160655_1_0_9"/>
<dbReference type="Proteomes" id="UP000001877">
    <property type="component" value="Chromosome"/>
</dbReference>
<dbReference type="GO" id="GO:0005829">
    <property type="term" value="C:cytosol"/>
    <property type="evidence" value="ECO:0007669"/>
    <property type="project" value="TreeGrafter"/>
</dbReference>
<dbReference type="GO" id="GO:0015935">
    <property type="term" value="C:small ribosomal subunit"/>
    <property type="evidence" value="ECO:0007669"/>
    <property type="project" value="TreeGrafter"/>
</dbReference>
<dbReference type="GO" id="GO:0070181">
    <property type="term" value="F:small ribosomal subunit rRNA binding"/>
    <property type="evidence" value="ECO:0007669"/>
    <property type="project" value="TreeGrafter"/>
</dbReference>
<dbReference type="GO" id="GO:0003735">
    <property type="term" value="F:structural constituent of ribosome"/>
    <property type="evidence" value="ECO:0007669"/>
    <property type="project" value="InterPro"/>
</dbReference>
<dbReference type="GO" id="GO:0006412">
    <property type="term" value="P:translation"/>
    <property type="evidence" value="ECO:0007669"/>
    <property type="project" value="UniProtKB-UniRule"/>
</dbReference>
<dbReference type="FunFam" id="1.20.58.110:FF:000001">
    <property type="entry name" value="30S ribosomal protein S20"/>
    <property type="match status" value="1"/>
</dbReference>
<dbReference type="Gene3D" id="1.20.58.110">
    <property type="entry name" value="Ribosomal protein S20"/>
    <property type="match status" value="1"/>
</dbReference>
<dbReference type="HAMAP" id="MF_00500">
    <property type="entry name" value="Ribosomal_bS20"/>
    <property type="match status" value="1"/>
</dbReference>
<dbReference type="InterPro" id="IPR002583">
    <property type="entry name" value="Ribosomal_bS20"/>
</dbReference>
<dbReference type="InterPro" id="IPR036510">
    <property type="entry name" value="Ribosomal_bS20_sf"/>
</dbReference>
<dbReference type="NCBIfam" id="TIGR00029">
    <property type="entry name" value="S20"/>
    <property type="match status" value="1"/>
</dbReference>
<dbReference type="PANTHER" id="PTHR33398">
    <property type="entry name" value="30S RIBOSOMAL PROTEIN S20"/>
    <property type="match status" value="1"/>
</dbReference>
<dbReference type="PANTHER" id="PTHR33398:SF1">
    <property type="entry name" value="SMALL RIBOSOMAL SUBUNIT PROTEIN BS20C"/>
    <property type="match status" value="1"/>
</dbReference>
<dbReference type="Pfam" id="PF01649">
    <property type="entry name" value="Ribosomal_S20p"/>
    <property type="match status" value="1"/>
</dbReference>
<dbReference type="SUPFAM" id="SSF46992">
    <property type="entry name" value="Ribosomal protein S20"/>
    <property type="match status" value="1"/>
</dbReference>